<comment type="alternative products">
    <event type="alternative splicing"/>
    <isoform>
        <id>Q9LJF9-1</id>
        <name>1</name>
        <sequence type="displayed"/>
    </isoform>
    <text>A number of isoforms are produced. According to EST sequences.</text>
</comment>
<comment type="sequence caution" evidence="2">
    <conflict type="erroneous gene model prediction">
        <sequence resource="EMBL-CDS" id="AEE77240"/>
    </conflict>
</comment>
<comment type="sequence caution">
    <conflict type="frameshift">
        <sequence resource="EMBL-CDS" id="AEE77240"/>
    </conflict>
</comment>
<comment type="sequence caution" evidence="2">
    <conflict type="erroneous gene model prediction">
        <sequence resource="EMBL-CDS" id="BAB01184"/>
    </conflict>
</comment>
<comment type="sequence caution">
    <conflict type="frameshift">
        <sequence resource="EMBL-CDS" id="BAB01184"/>
    </conflict>
</comment>
<comment type="sequence caution" evidence="2">
    <conflict type="miscellaneous discrepancy">
        <sequence resource="EMBL" id="BX823705"/>
    </conflict>
    <text>Sequencing errors.</text>
</comment>
<gene>
    <name type="ordered locus">At3g26920</name>
    <name type="ORF">MDJ14.26</name>
</gene>
<feature type="chain" id="PRO_0000281947" description="F-box/FBD/LRR-repeat protein At3g26920">
    <location>
        <begin position="1"/>
        <end position="434"/>
    </location>
</feature>
<feature type="domain" description="F-box" evidence="1">
    <location>
        <begin position="16"/>
        <end position="65"/>
    </location>
</feature>
<feature type="repeat" description="LRR 1">
    <location>
        <begin position="69"/>
        <end position="95"/>
    </location>
</feature>
<feature type="repeat" description="LRR 2">
    <location>
        <begin position="100"/>
        <end position="125"/>
    </location>
</feature>
<feature type="repeat" description="LRR 3">
    <location>
        <begin position="145"/>
        <end position="172"/>
    </location>
</feature>
<feature type="repeat" description="LRR 4">
    <location>
        <begin position="173"/>
        <end position="198"/>
    </location>
</feature>
<feature type="repeat" description="LRR 5">
    <location>
        <begin position="219"/>
        <end position="244"/>
    </location>
</feature>
<feature type="repeat" description="LRR 6">
    <location>
        <begin position="265"/>
        <end position="290"/>
    </location>
</feature>
<feature type="repeat" description="LRR 7">
    <location>
        <begin position="315"/>
        <end position="341"/>
    </location>
</feature>
<feature type="domain" description="FBD">
    <location>
        <begin position="353"/>
        <end position="403"/>
    </location>
</feature>
<feature type="sequence conflict" description="In Ref. 5; AU239528." evidence="2" ref="5">
    <original>N</original>
    <variation>Y</variation>
    <location>
        <position position="67"/>
    </location>
</feature>
<feature type="sequence conflict" description="In Ref. 5; AU239528." evidence="2" ref="5">
    <original>F</original>
    <variation>V</variation>
    <location>
        <position position="72"/>
    </location>
</feature>
<feature type="sequence conflict" description="In Ref. 5; AU230845." evidence="2" ref="5">
    <original>S</original>
    <variation>T</variation>
    <location>
        <position position="77"/>
    </location>
</feature>
<feature type="sequence conflict" description="In Ref. 5; AU230845." evidence="2" ref="5">
    <original>R</original>
    <variation>P</variation>
    <location>
        <position position="116"/>
    </location>
</feature>
<feature type="sequence conflict" description="In Ref. 5; AU230845." evidence="2" ref="5">
    <original>C</original>
    <variation>S</variation>
    <location>
        <position position="151"/>
    </location>
</feature>
<sequence length="434" mass="50306">MTMKRCKSCGQSLSNEDRISQLPEALLLQILSLLPTKEVVAVSVLAKRWRFLWKMVPSLEFFYYFTNDLERFSYNVSKCLFSHQAPFLQSLHLNMNFGCDPRIMDFEILIGIAFGRQLRKLVLKVYSGDWFKFPTSLYNSETLETLELYHCILIDVPFPVCLKSLRTLNLHEVEFVNDESVVNLLAGCISLENLVIHQTTDLNVKTFTIAVPSLQRLTVIVEYYEEFSVFVVNTPSLKYLKIEGIIVDDRTCIIENTPELVEASIIDVSFKVFESILGSLASVQRLSLKVSLVEIFSLPPISNTFYHLTYLELSTYKPKWWNLLTLMLDTSPNLQVLKIFDFMTSQEQRPWEKWNEPKNVPECLLLHLETFVWTCYEGKLENEIELAKYILRNARRLKKATFSIIEINPDKRVEMVGELKSVVRASNSCQLVFI</sequence>
<dbReference type="EMBL" id="AP000602">
    <property type="protein sequence ID" value="BAB01184.1"/>
    <property type="status" value="ALT_SEQ"/>
    <property type="molecule type" value="Genomic_DNA"/>
</dbReference>
<dbReference type="EMBL" id="AB016889">
    <property type="protein sequence ID" value="BAB01184.1"/>
    <property type="status" value="JOINED"/>
    <property type="molecule type" value="Genomic_DNA"/>
</dbReference>
<dbReference type="EMBL" id="CP002686">
    <property type="protein sequence ID" value="AEE77240.1"/>
    <property type="status" value="ALT_SEQ"/>
    <property type="molecule type" value="Genomic_DNA"/>
</dbReference>
<dbReference type="EMBL" id="BX823705">
    <property type="status" value="NOT_ANNOTATED_CDS"/>
    <property type="molecule type" value="mRNA"/>
</dbReference>
<dbReference type="EMBL" id="AU230845">
    <property type="status" value="NOT_ANNOTATED_CDS"/>
    <property type="molecule type" value="mRNA"/>
</dbReference>
<dbReference type="EMBL" id="AU239528">
    <property type="status" value="NOT_ANNOTATED_CDS"/>
    <property type="molecule type" value="mRNA"/>
</dbReference>
<dbReference type="RefSeq" id="NP_001327287.1">
    <property type="nucleotide sequence ID" value="NM_001338840.1"/>
</dbReference>
<dbReference type="RefSeq" id="NP_189327.5">
    <property type="nucleotide sequence ID" value="NM_113604.7"/>
</dbReference>
<dbReference type="FunCoup" id="Q9LJF9">
    <property type="interactions" value="2"/>
</dbReference>
<dbReference type="PaxDb" id="3702-AT3G26920.1"/>
<dbReference type="ProteomicsDB" id="230568">
    <molecule id="Q9LJF9-1"/>
</dbReference>
<dbReference type="GeneID" id="822308"/>
<dbReference type="KEGG" id="ath:AT3G26920"/>
<dbReference type="Araport" id="AT3G26920"/>
<dbReference type="TAIR" id="AT3G26920"/>
<dbReference type="InParanoid" id="Q9LJF9"/>
<dbReference type="PRO" id="PR:Q9LJF9"/>
<dbReference type="Proteomes" id="UP000006548">
    <property type="component" value="Chromosome 3"/>
</dbReference>
<dbReference type="ExpressionAtlas" id="Q9LJF9">
    <property type="expression patterns" value="baseline and differential"/>
</dbReference>
<dbReference type="Gene3D" id="1.20.1280.50">
    <property type="match status" value="1"/>
</dbReference>
<dbReference type="Gene3D" id="3.80.10.10">
    <property type="entry name" value="Ribonuclease Inhibitor"/>
    <property type="match status" value="1"/>
</dbReference>
<dbReference type="InterPro" id="IPR036047">
    <property type="entry name" value="F-box-like_dom_sf"/>
</dbReference>
<dbReference type="InterPro" id="IPR001810">
    <property type="entry name" value="F-box_dom"/>
</dbReference>
<dbReference type="InterPro" id="IPR006566">
    <property type="entry name" value="FBD"/>
</dbReference>
<dbReference type="InterPro" id="IPR050232">
    <property type="entry name" value="FBL13/AtMIF1-like"/>
</dbReference>
<dbReference type="InterPro" id="IPR032675">
    <property type="entry name" value="LRR_dom_sf"/>
</dbReference>
<dbReference type="InterPro" id="IPR055411">
    <property type="entry name" value="LRR_FXL15/At3g58940/PEG3-like"/>
</dbReference>
<dbReference type="PANTHER" id="PTHR31900:SF34">
    <property type="entry name" value="EMB|CAB62440.1-RELATED"/>
    <property type="match status" value="1"/>
</dbReference>
<dbReference type="PANTHER" id="PTHR31900">
    <property type="entry name" value="F-BOX/RNI SUPERFAMILY PROTEIN-RELATED"/>
    <property type="match status" value="1"/>
</dbReference>
<dbReference type="Pfam" id="PF00646">
    <property type="entry name" value="F-box"/>
    <property type="match status" value="1"/>
</dbReference>
<dbReference type="Pfam" id="PF08387">
    <property type="entry name" value="FBD"/>
    <property type="match status" value="1"/>
</dbReference>
<dbReference type="Pfam" id="PF24758">
    <property type="entry name" value="LRR_At5g56370"/>
    <property type="match status" value="1"/>
</dbReference>
<dbReference type="SMART" id="SM00579">
    <property type="entry name" value="FBD"/>
    <property type="match status" value="1"/>
</dbReference>
<dbReference type="SUPFAM" id="SSF81383">
    <property type="entry name" value="F-box domain"/>
    <property type="match status" value="1"/>
</dbReference>
<dbReference type="SUPFAM" id="SSF52047">
    <property type="entry name" value="RNI-like"/>
    <property type="match status" value="1"/>
</dbReference>
<dbReference type="PROSITE" id="PS50181">
    <property type="entry name" value="FBOX"/>
    <property type="match status" value="1"/>
</dbReference>
<keyword id="KW-0025">Alternative splicing</keyword>
<keyword id="KW-0433">Leucine-rich repeat</keyword>
<keyword id="KW-1185">Reference proteome</keyword>
<keyword id="KW-0677">Repeat</keyword>
<accession>Q9LJF9</accession>
<accession>F4JEU5</accession>
<evidence type="ECO:0000255" key="1">
    <source>
        <dbReference type="PROSITE-ProRule" id="PRU00080"/>
    </source>
</evidence>
<evidence type="ECO:0000305" key="2"/>
<reference key="1">
    <citation type="journal article" date="2000" name="DNA Res.">
        <title>Structural analysis of Arabidopsis thaliana chromosome 3. II. Sequence features of the 4,251,695 bp regions covered by 90 P1, TAC and BAC clones.</title>
        <authorList>
            <person name="Kaneko T."/>
            <person name="Katoh T."/>
            <person name="Sato S."/>
            <person name="Nakamura Y."/>
            <person name="Asamizu E."/>
            <person name="Tabata S."/>
        </authorList>
    </citation>
    <scope>NUCLEOTIDE SEQUENCE [LARGE SCALE GENOMIC DNA]</scope>
    <source>
        <strain>cv. Columbia</strain>
    </source>
</reference>
<reference key="2">
    <citation type="journal article" date="2000" name="DNA Res.">
        <title>Structural analysis of Arabidopsis thaliana chromosome 3. I. Sequence features of the regions of 4,504,864 bp covered by sixty P1 and TAC clones.</title>
        <authorList>
            <person name="Sato S."/>
            <person name="Nakamura Y."/>
            <person name="Kaneko T."/>
            <person name="Katoh T."/>
            <person name="Asamizu E."/>
            <person name="Tabata S."/>
        </authorList>
    </citation>
    <scope>NUCLEOTIDE SEQUENCE [LARGE SCALE GENOMIC DNA]</scope>
    <source>
        <strain>cv. Columbia</strain>
    </source>
</reference>
<reference key="3">
    <citation type="journal article" date="2017" name="Plant J.">
        <title>Araport11: a complete reannotation of the Arabidopsis thaliana reference genome.</title>
        <authorList>
            <person name="Cheng C.Y."/>
            <person name="Krishnakumar V."/>
            <person name="Chan A.P."/>
            <person name="Thibaud-Nissen F."/>
            <person name="Schobel S."/>
            <person name="Town C.D."/>
        </authorList>
    </citation>
    <scope>GENOME REANNOTATION</scope>
    <source>
        <strain>cv. Columbia</strain>
    </source>
</reference>
<reference key="4">
    <citation type="journal article" date="2004" name="Genome Res.">
        <title>Whole genome sequence comparisons and 'full-length' cDNA sequences: a combined approach to evaluate and improve Arabidopsis genome annotation.</title>
        <authorList>
            <person name="Castelli V."/>
            <person name="Aury J.-M."/>
            <person name="Jaillon O."/>
            <person name="Wincker P."/>
            <person name="Clepet C."/>
            <person name="Menard M."/>
            <person name="Cruaud C."/>
            <person name="Quetier F."/>
            <person name="Scarpelli C."/>
            <person name="Schaechter V."/>
            <person name="Temple G."/>
            <person name="Caboche M."/>
            <person name="Weissenbach J."/>
            <person name="Salanoubat M."/>
        </authorList>
    </citation>
    <scope>NUCLEOTIDE SEQUENCE [LARGE SCALE MRNA]</scope>
    <source>
        <strain>cv. Columbia</strain>
    </source>
</reference>
<reference key="5">
    <citation type="journal article" date="2002" name="Science">
        <title>Functional annotation of a full-length Arabidopsis cDNA collection.</title>
        <authorList>
            <person name="Seki M."/>
            <person name="Narusaka M."/>
            <person name="Kamiya A."/>
            <person name="Ishida J."/>
            <person name="Satou M."/>
            <person name="Sakurai T."/>
            <person name="Nakajima M."/>
            <person name="Enju A."/>
            <person name="Akiyama K."/>
            <person name="Oono Y."/>
            <person name="Muramatsu M."/>
            <person name="Hayashizaki Y."/>
            <person name="Kawai J."/>
            <person name="Carninci P."/>
            <person name="Itoh M."/>
            <person name="Ishii Y."/>
            <person name="Arakawa T."/>
            <person name="Shibata K."/>
            <person name="Shinagawa A."/>
            <person name="Shinozaki K."/>
        </authorList>
    </citation>
    <scope>NUCLEOTIDE SEQUENCE [LARGE SCALE MRNA] OF 1-191</scope>
    <source>
        <strain>cv. Columbia</strain>
    </source>
</reference>
<protein>
    <recommendedName>
        <fullName>F-box/FBD/LRR-repeat protein At3g26920</fullName>
    </recommendedName>
</protein>
<organism>
    <name type="scientific">Arabidopsis thaliana</name>
    <name type="common">Mouse-ear cress</name>
    <dbReference type="NCBI Taxonomy" id="3702"/>
    <lineage>
        <taxon>Eukaryota</taxon>
        <taxon>Viridiplantae</taxon>
        <taxon>Streptophyta</taxon>
        <taxon>Embryophyta</taxon>
        <taxon>Tracheophyta</taxon>
        <taxon>Spermatophyta</taxon>
        <taxon>Magnoliopsida</taxon>
        <taxon>eudicotyledons</taxon>
        <taxon>Gunneridae</taxon>
        <taxon>Pentapetalae</taxon>
        <taxon>rosids</taxon>
        <taxon>malvids</taxon>
        <taxon>Brassicales</taxon>
        <taxon>Brassicaceae</taxon>
        <taxon>Camelineae</taxon>
        <taxon>Arabidopsis</taxon>
    </lineage>
</organism>
<name>FDL44_ARATH</name>
<proteinExistence type="evidence at transcript level"/>